<sequence>MPKMKTKRAAAKRFKVTGTGKLKRAKAFKSHILTKKSRKTKRNLRKAGYVSESQEKVMKKVLPYL</sequence>
<proteinExistence type="inferred from homology"/>
<gene>
    <name evidence="1" type="primary">rpmI</name>
    <name type="ordered locus">CLD_1405</name>
</gene>
<keyword id="KW-0687">Ribonucleoprotein</keyword>
<keyword id="KW-0689">Ribosomal protein</keyword>
<accession>B1IMV1</accession>
<organism>
    <name type="scientific">Clostridium botulinum (strain Okra / Type B1)</name>
    <dbReference type="NCBI Taxonomy" id="498213"/>
    <lineage>
        <taxon>Bacteria</taxon>
        <taxon>Bacillati</taxon>
        <taxon>Bacillota</taxon>
        <taxon>Clostridia</taxon>
        <taxon>Eubacteriales</taxon>
        <taxon>Clostridiaceae</taxon>
        <taxon>Clostridium</taxon>
    </lineage>
</organism>
<evidence type="ECO:0000255" key="1">
    <source>
        <dbReference type="HAMAP-Rule" id="MF_00514"/>
    </source>
</evidence>
<evidence type="ECO:0000305" key="2"/>
<protein>
    <recommendedName>
        <fullName evidence="1">Large ribosomal subunit protein bL35</fullName>
    </recommendedName>
    <alternativeName>
        <fullName evidence="2">50S ribosomal protein L35</fullName>
    </alternativeName>
</protein>
<comment type="similarity">
    <text evidence="1">Belongs to the bacterial ribosomal protein bL35 family.</text>
</comment>
<name>RL35_CLOBK</name>
<reference key="1">
    <citation type="journal article" date="2007" name="PLoS ONE">
        <title>Analysis of the neurotoxin complex genes in Clostridium botulinum A1-A4 and B1 strains: BoNT/A3, /Ba4 and /B1 clusters are located within plasmids.</title>
        <authorList>
            <person name="Smith T.J."/>
            <person name="Hill K.K."/>
            <person name="Foley B.T."/>
            <person name="Detter J.C."/>
            <person name="Munk A.C."/>
            <person name="Bruce D.C."/>
            <person name="Doggett N.A."/>
            <person name="Smith L.A."/>
            <person name="Marks J.D."/>
            <person name="Xie G."/>
            <person name="Brettin T.S."/>
        </authorList>
    </citation>
    <scope>NUCLEOTIDE SEQUENCE [LARGE SCALE GENOMIC DNA]</scope>
    <source>
        <strain>Okra / Type B1</strain>
    </source>
</reference>
<dbReference type="EMBL" id="CP000939">
    <property type="protein sequence ID" value="ACA45534.1"/>
    <property type="molecule type" value="Genomic_DNA"/>
</dbReference>
<dbReference type="RefSeq" id="WP_003357520.1">
    <property type="nucleotide sequence ID" value="NC_010516.1"/>
</dbReference>
<dbReference type="SMR" id="B1IMV1"/>
<dbReference type="GeneID" id="92939857"/>
<dbReference type="KEGG" id="cbb:CLD_1405"/>
<dbReference type="HOGENOM" id="CLU_169643_1_1_9"/>
<dbReference type="Proteomes" id="UP000008541">
    <property type="component" value="Chromosome"/>
</dbReference>
<dbReference type="GO" id="GO:0022625">
    <property type="term" value="C:cytosolic large ribosomal subunit"/>
    <property type="evidence" value="ECO:0007669"/>
    <property type="project" value="TreeGrafter"/>
</dbReference>
<dbReference type="GO" id="GO:0003735">
    <property type="term" value="F:structural constituent of ribosome"/>
    <property type="evidence" value="ECO:0007669"/>
    <property type="project" value="InterPro"/>
</dbReference>
<dbReference type="GO" id="GO:0006412">
    <property type="term" value="P:translation"/>
    <property type="evidence" value="ECO:0007669"/>
    <property type="project" value="UniProtKB-UniRule"/>
</dbReference>
<dbReference type="FunFam" id="4.10.410.60:FF:000001">
    <property type="entry name" value="50S ribosomal protein L35"/>
    <property type="match status" value="1"/>
</dbReference>
<dbReference type="Gene3D" id="4.10.410.60">
    <property type="match status" value="1"/>
</dbReference>
<dbReference type="HAMAP" id="MF_00514">
    <property type="entry name" value="Ribosomal_bL35"/>
    <property type="match status" value="1"/>
</dbReference>
<dbReference type="InterPro" id="IPR001706">
    <property type="entry name" value="Ribosomal_bL35"/>
</dbReference>
<dbReference type="InterPro" id="IPR021137">
    <property type="entry name" value="Ribosomal_bL35-like"/>
</dbReference>
<dbReference type="InterPro" id="IPR018265">
    <property type="entry name" value="Ribosomal_bL35_CS"/>
</dbReference>
<dbReference type="InterPro" id="IPR037229">
    <property type="entry name" value="Ribosomal_bL35_sf"/>
</dbReference>
<dbReference type="NCBIfam" id="TIGR00001">
    <property type="entry name" value="rpmI_bact"/>
    <property type="match status" value="1"/>
</dbReference>
<dbReference type="PANTHER" id="PTHR33343">
    <property type="entry name" value="54S RIBOSOMAL PROTEIN BL35M"/>
    <property type="match status" value="1"/>
</dbReference>
<dbReference type="PANTHER" id="PTHR33343:SF1">
    <property type="entry name" value="LARGE RIBOSOMAL SUBUNIT PROTEIN BL35M"/>
    <property type="match status" value="1"/>
</dbReference>
<dbReference type="Pfam" id="PF01632">
    <property type="entry name" value="Ribosomal_L35p"/>
    <property type="match status" value="1"/>
</dbReference>
<dbReference type="PRINTS" id="PR00064">
    <property type="entry name" value="RIBOSOMALL35"/>
</dbReference>
<dbReference type="SUPFAM" id="SSF143034">
    <property type="entry name" value="L35p-like"/>
    <property type="match status" value="1"/>
</dbReference>
<dbReference type="PROSITE" id="PS00936">
    <property type="entry name" value="RIBOSOMAL_L35"/>
    <property type="match status" value="1"/>
</dbReference>
<feature type="chain" id="PRO_1000127328" description="Large ribosomal subunit protein bL35">
    <location>
        <begin position="1"/>
        <end position="65"/>
    </location>
</feature>